<protein>
    <recommendedName>
        <fullName evidence="1">Small ribosomal subunit protein uS19</fullName>
    </recommendedName>
    <alternativeName>
        <fullName evidence="2">30S ribosomal protein S19</fullName>
    </alternativeName>
</protein>
<name>RS19_FRATT</name>
<evidence type="ECO:0000255" key="1">
    <source>
        <dbReference type="HAMAP-Rule" id="MF_00531"/>
    </source>
</evidence>
<evidence type="ECO:0000305" key="2"/>
<gene>
    <name evidence="1" type="primary">rpsS</name>
    <name type="ordered locus">FTT_0329</name>
</gene>
<proteinExistence type="inferred from homology"/>
<comment type="function">
    <text evidence="1">Protein S19 forms a complex with S13 that binds strongly to the 16S ribosomal RNA.</text>
</comment>
<comment type="similarity">
    <text evidence="1">Belongs to the universal ribosomal protein uS19 family.</text>
</comment>
<dbReference type="EMBL" id="AJ749949">
    <property type="protein sequence ID" value="CAG44962.1"/>
    <property type="molecule type" value="Genomic_DNA"/>
</dbReference>
<dbReference type="RefSeq" id="WP_003027195.1">
    <property type="nucleotide sequence ID" value="NZ_CP010290.1"/>
</dbReference>
<dbReference type="RefSeq" id="YP_169378.1">
    <property type="nucleotide sequence ID" value="NC_006570.2"/>
</dbReference>
<dbReference type="SMR" id="Q5NHW4"/>
<dbReference type="STRING" id="177416.FTT_0329"/>
<dbReference type="DNASU" id="3192508"/>
<dbReference type="EnsemblBacteria" id="CAG44962">
    <property type="protein sequence ID" value="CAG44962"/>
    <property type="gene ID" value="FTT_0329"/>
</dbReference>
<dbReference type="GeneID" id="75264257"/>
<dbReference type="KEGG" id="ftu:FTT_0329"/>
<dbReference type="eggNOG" id="COG0185">
    <property type="taxonomic scope" value="Bacteria"/>
</dbReference>
<dbReference type="OrthoDB" id="9797833at2"/>
<dbReference type="Proteomes" id="UP000001174">
    <property type="component" value="Chromosome"/>
</dbReference>
<dbReference type="GO" id="GO:0005737">
    <property type="term" value="C:cytoplasm"/>
    <property type="evidence" value="ECO:0007669"/>
    <property type="project" value="UniProtKB-ARBA"/>
</dbReference>
<dbReference type="GO" id="GO:0015935">
    <property type="term" value="C:small ribosomal subunit"/>
    <property type="evidence" value="ECO:0007669"/>
    <property type="project" value="InterPro"/>
</dbReference>
<dbReference type="GO" id="GO:0019843">
    <property type="term" value="F:rRNA binding"/>
    <property type="evidence" value="ECO:0007669"/>
    <property type="project" value="UniProtKB-UniRule"/>
</dbReference>
<dbReference type="GO" id="GO:0003735">
    <property type="term" value="F:structural constituent of ribosome"/>
    <property type="evidence" value="ECO:0007669"/>
    <property type="project" value="InterPro"/>
</dbReference>
<dbReference type="GO" id="GO:0000028">
    <property type="term" value="P:ribosomal small subunit assembly"/>
    <property type="evidence" value="ECO:0007669"/>
    <property type="project" value="TreeGrafter"/>
</dbReference>
<dbReference type="GO" id="GO:0006412">
    <property type="term" value="P:translation"/>
    <property type="evidence" value="ECO:0007669"/>
    <property type="project" value="UniProtKB-UniRule"/>
</dbReference>
<dbReference type="FunFam" id="3.30.860.10:FF:000001">
    <property type="entry name" value="30S ribosomal protein S19"/>
    <property type="match status" value="1"/>
</dbReference>
<dbReference type="Gene3D" id="3.30.860.10">
    <property type="entry name" value="30s Ribosomal Protein S19, Chain A"/>
    <property type="match status" value="1"/>
</dbReference>
<dbReference type="HAMAP" id="MF_00531">
    <property type="entry name" value="Ribosomal_uS19"/>
    <property type="match status" value="1"/>
</dbReference>
<dbReference type="InterPro" id="IPR002222">
    <property type="entry name" value="Ribosomal_uS19"/>
</dbReference>
<dbReference type="InterPro" id="IPR005732">
    <property type="entry name" value="Ribosomal_uS19_bac-type"/>
</dbReference>
<dbReference type="InterPro" id="IPR020934">
    <property type="entry name" value="Ribosomal_uS19_CS"/>
</dbReference>
<dbReference type="InterPro" id="IPR023575">
    <property type="entry name" value="Ribosomal_uS19_SF"/>
</dbReference>
<dbReference type="NCBIfam" id="TIGR01050">
    <property type="entry name" value="rpsS_bact"/>
    <property type="match status" value="1"/>
</dbReference>
<dbReference type="PANTHER" id="PTHR11880">
    <property type="entry name" value="RIBOSOMAL PROTEIN S19P FAMILY MEMBER"/>
    <property type="match status" value="1"/>
</dbReference>
<dbReference type="PANTHER" id="PTHR11880:SF8">
    <property type="entry name" value="SMALL RIBOSOMAL SUBUNIT PROTEIN US19M"/>
    <property type="match status" value="1"/>
</dbReference>
<dbReference type="Pfam" id="PF00203">
    <property type="entry name" value="Ribosomal_S19"/>
    <property type="match status" value="1"/>
</dbReference>
<dbReference type="PIRSF" id="PIRSF002144">
    <property type="entry name" value="Ribosomal_S19"/>
    <property type="match status" value="1"/>
</dbReference>
<dbReference type="PRINTS" id="PR00975">
    <property type="entry name" value="RIBOSOMALS19"/>
</dbReference>
<dbReference type="SUPFAM" id="SSF54570">
    <property type="entry name" value="Ribosomal protein S19"/>
    <property type="match status" value="1"/>
</dbReference>
<dbReference type="PROSITE" id="PS00323">
    <property type="entry name" value="RIBOSOMAL_S19"/>
    <property type="match status" value="1"/>
</dbReference>
<reference key="1">
    <citation type="journal article" date="2005" name="Nat. Genet.">
        <title>The complete genome sequence of Francisella tularensis, the causative agent of tularemia.</title>
        <authorList>
            <person name="Larsson P."/>
            <person name="Oyston P.C.F."/>
            <person name="Chain P."/>
            <person name="Chu M.C."/>
            <person name="Duffield M."/>
            <person name="Fuxelius H.-H."/>
            <person name="Garcia E."/>
            <person name="Haelltorp G."/>
            <person name="Johansson D."/>
            <person name="Isherwood K.E."/>
            <person name="Karp P.D."/>
            <person name="Larsson E."/>
            <person name="Liu Y."/>
            <person name="Michell S."/>
            <person name="Prior J."/>
            <person name="Prior R."/>
            <person name="Malfatti S."/>
            <person name="Sjoestedt A."/>
            <person name="Svensson K."/>
            <person name="Thompson N."/>
            <person name="Vergez L."/>
            <person name="Wagg J.K."/>
            <person name="Wren B.W."/>
            <person name="Lindler L.E."/>
            <person name="Andersson S.G.E."/>
            <person name="Forsman M."/>
            <person name="Titball R.W."/>
        </authorList>
    </citation>
    <scope>NUCLEOTIDE SEQUENCE [LARGE SCALE GENOMIC DNA]</scope>
    <source>
        <strain>SCHU S4 / Schu 4</strain>
    </source>
</reference>
<keyword id="KW-1185">Reference proteome</keyword>
<keyword id="KW-0687">Ribonucleoprotein</keyword>
<keyword id="KW-0689">Ribosomal protein</keyword>
<keyword id="KW-0694">RNA-binding</keyword>
<keyword id="KW-0699">rRNA-binding</keyword>
<accession>Q5NHW4</accession>
<organism>
    <name type="scientific">Francisella tularensis subsp. tularensis (strain SCHU S4 / Schu 4)</name>
    <dbReference type="NCBI Taxonomy" id="177416"/>
    <lineage>
        <taxon>Bacteria</taxon>
        <taxon>Pseudomonadati</taxon>
        <taxon>Pseudomonadota</taxon>
        <taxon>Gammaproteobacteria</taxon>
        <taxon>Thiotrichales</taxon>
        <taxon>Francisellaceae</taxon>
        <taxon>Francisella</taxon>
    </lineage>
</organism>
<feature type="chain" id="PRO_0000129825" description="Small ribosomal subunit protein uS19">
    <location>
        <begin position="1"/>
        <end position="92"/>
    </location>
</feature>
<sequence length="92" mass="10499">MPRSLKKGPFVDHHLLKKVFEAQESNSKKPIKTWSRRSMIVPDMIGLTIAVHNGQQHVPVLMTEEMVGHKLGEFVVTRNYRGHAADKKAKKK</sequence>